<name>DTD_RHOOB</name>
<accession>C1B035</accession>
<organism>
    <name type="scientific">Rhodococcus opacus (strain B4)</name>
    <dbReference type="NCBI Taxonomy" id="632772"/>
    <lineage>
        <taxon>Bacteria</taxon>
        <taxon>Bacillati</taxon>
        <taxon>Actinomycetota</taxon>
        <taxon>Actinomycetes</taxon>
        <taxon>Mycobacteriales</taxon>
        <taxon>Nocardiaceae</taxon>
        <taxon>Rhodococcus</taxon>
    </lineage>
</organism>
<sequence>MRALVQRVTSASVRVDGDEVGRITPPAGGHGLLVLVGVTHTDDEAKAALLARKVWTMRILENEQSAADLDAPVLVASQFTLMADTRRGRRPSWSAAAPRPVAEPLVDEFTGALRELGATVETGVFGEHMEISLVNDGPVTLLIDV</sequence>
<dbReference type="EC" id="3.1.1.96" evidence="1"/>
<dbReference type="EMBL" id="AP011115">
    <property type="protein sequence ID" value="BAH54456.1"/>
    <property type="molecule type" value="Genomic_DNA"/>
</dbReference>
<dbReference type="RefSeq" id="WP_015889925.1">
    <property type="nucleotide sequence ID" value="NC_012522.1"/>
</dbReference>
<dbReference type="SMR" id="C1B035"/>
<dbReference type="STRING" id="632772.ROP_62090"/>
<dbReference type="KEGG" id="rop:ROP_62090"/>
<dbReference type="PATRIC" id="fig|632772.20.peg.6485"/>
<dbReference type="HOGENOM" id="CLU_076901_1_2_11"/>
<dbReference type="OrthoDB" id="9801395at2"/>
<dbReference type="Proteomes" id="UP000002212">
    <property type="component" value="Chromosome"/>
</dbReference>
<dbReference type="GO" id="GO:0005737">
    <property type="term" value="C:cytoplasm"/>
    <property type="evidence" value="ECO:0007669"/>
    <property type="project" value="UniProtKB-SubCell"/>
</dbReference>
<dbReference type="GO" id="GO:0051500">
    <property type="term" value="F:D-tyrosyl-tRNA(Tyr) deacylase activity"/>
    <property type="evidence" value="ECO:0007669"/>
    <property type="project" value="TreeGrafter"/>
</dbReference>
<dbReference type="GO" id="GO:0106026">
    <property type="term" value="F:Gly-tRNA(Ala) deacylase activity"/>
    <property type="evidence" value="ECO:0007669"/>
    <property type="project" value="UniProtKB-UniRule"/>
</dbReference>
<dbReference type="GO" id="GO:0043908">
    <property type="term" value="F:Ser(Gly)-tRNA(Ala) hydrolase activity"/>
    <property type="evidence" value="ECO:0007669"/>
    <property type="project" value="UniProtKB-UniRule"/>
</dbReference>
<dbReference type="GO" id="GO:0000049">
    <property type="term" value="F:tRNA binding"/>
    <property type="evidence" value="ECO:0007669"/>
    <property type="project" value="UniProtKB-UniRule"/>
</dbReference>
<dbReference type="GO" id="GO:0019478">
    <property type="term" value="P:D-amino acid catabolic process"/>
    <property type="evidence" value="ECO:0007669"/>
    <property type="project" value="UniProtKB-UniRule"/>
</dbReference>
<dbReference type="FunFam" id="3.50.80.10:FF:000001">
    <property type="entry name" value="D-aminoacyl-tRNA deacylase"/>
    <property type="match status" value="1"/>
</dbReference>
<dbReference type="Gene3D" id="3.50.80.10">
    <property type="entry name" value="D-tyrosyl-tRNA(Tyr) deacylase"/>
    <property type="match status" value="1"/>
</dbReference>
<dbReference type="HAMAP" id="MF_00518">
    <property type="entry name" value="Deacylase_Dtd"/>
    <property type="match status" value="1"/>
</dbReference>
<dbReference type="InterPro" id="IPR003732">
    <property type="entry name" value="Daa-tRNA_deacyls_DTD"/>
</dbReference>
<dbReference type="InterPro" id="IPR023509">
    <property type="entry name" value="DTD-like_sf"/>
</dbReference>
<dbReference type="NCBIfam" id="TIGR00256">
    <property type="entry name" value="D-aminoacyl-tRNA deacylase"/>
    <property type="match status" value="1"/>
</dbReference>
<dbReference type="PANTHER" id="PTHR10472:SF5">
    <property type="entry name" value="D-AMINOACYL-TRNA DEACYLASE 1"/>
    <property type="match status" value="1"/>
</dbReference>
<dbReference type="PANTHER" id="PTHR10472">
    <property type="entry name" value="D-TYROSYL-TRNA TYR DEACYLASE"/>
    <property type="match status" value="1"/>
</dbReference>
<dbReference type="Pfam" id="PF02580">
    <property type="entry name" value="Tyr_Deacylase"/>
    <property type="match status" value="1"/>
</dbReference>
<dbReference type="SUPFAM" id="SSF69500">
    <property type="entry name" value="DTD-like"/>
    <property type="match status" value="1"/>
</dbReference>
<reference key="1">
    <citation type="submission" date="2009-03" db="EMBL/GenBank/DDBJ databases">
        <title>Comparison of the complete genome sequences of Rhodococcus erythropolis PR4 and Rhodococcus opacus B4.</title>
        <authorList>
            <person name="Takarada H."/>
            <person name="Sekine M."/>
            <person name="Hosoyama A."/>
            <person name="Yamada R."/>
            <person name="Fujisawa T."/>
            <person name="Omata S."/>
            <person name="Shimizu A."/>
            <person name="Tsukatani N."/>
            <person name="Tanikawa S."/>
            <person name="Fujita N."/>
            <person name="Harayama S."/>
        </authorList>
    </citation>
    <scope>NUCLEOTIDE SEQUENCE [LARGE SCALE GENOMIC DNA]</scope>
    <source>
        <strain>B4</strain>
    </source>
</reference>
<evidence type="ECO:0000255" key="1">
    <source>
        <dbReference type="HAMAP-Rule" id="MF_00518"/>
    </source>
</evidence>
<feature type="chain" id="PRO_1000146207" description="D-aminoacyl-tRNA deacylase">
    <location>
        <begin position="1"/>
        <end position="145"/>
    </location>
</feature>
<feature type="short sequence motif" description="Gly-cisPro motif, important for rejection of L-amino acids" evidence="1">
    <location>
        <begin position="137"/>
        <end position="138"/>
    </location>
</feature>
<gene>
    <name evidence="1" type="primary">dtd</name>
    <name type="ordered locus">ROP_62090</name>
</gene>
<comment type="function">
    <text evidence="1">An aminoacyl-tRNA editing enzyme that deacylates mischarged D-aminoacyl-tRNAs. Also deacylates mischarged glycyl-tRNA(Ala), protecting cells against glycine mischarging by AlaRS. Acts via tRNA-based rather than protein-based catalysis; rejects L-amino acids rather than detecting D-amino acids in the active site. By recycling D-aminoacyl-tRNA to D-amino acids and free tRNA molecules, this enzyme counteracts the toxicity associated with the formation of D-aminoacyl-tRNA entities in vivo and helps enforce protein L-homochirality.</text>
</comment>
<comment type="catalytic activity">
    <reaction evidence="1">
        <text>glycyl-tRNA(Ala) + H2O = tRNA(Ala) + glycine + H(+)</text>
        <dbReference type="Rhea" id="RHEA:53744"/>
        <dbReference type="Rhea" id="RHEA-COMP:9657"/>
        <dbReference type="Rhea" id="RHEA-COMP:13640"/>
        <dbReference type="ChEBI" id="CHEBI:15377"/>
        <dbReference type="ChEBI" id="CHEBI:15378"/>
        <dbReference type="ChEBI" id="CHEBI:57305"/>
        <dbReference type="ChEBI" id="CHEBI:78442"/>
        <dbReference type="ChEBI" id="CHEBI:78522"/>
        <dbReference type="EC" id="3.1.1.96"/>
    </reaction>
</comment>
<comment type="catalytic activity">
    <reaction evidence="1">
        <text>a D-aminoacyl-tRNA + H2O = a tRNA + a D-alpha-amino acid + H(+)</text>
        <dbReference type="Rhea" id="RHEA:13953"/>
        <dbReference type="Rhea" id="RHEA-COMP:10123"/>
        <dbReference type="Rhea" id="RHEA-COMP:10124"/>
        <dbReference type="ChEBI" id="CHEBI:15377"/>
        <dbReference type="ChEBI" id="CHEBI:15378"/>
        <dbReference type="ChEBI" id="CHEBI:59871"/>
        <dbReference type="ChEBI" id="CHEBI:78442"/>
        <dbReference type="ChEBI" id="CHEBI:79333"/>
        <dbReference type="EC" id="3.1.1.96"/>
    </reaction>
</comment>
<comment type="subunit">
    <text evidence="1">Homodimer.</text>
</comment>
<comment type="subcellular location">
    <subcellularLocation>
        <location evidence="1">Cytoplasm</location>
    </subcellularLocation>
</comment>
<comment type="domain">
    <text evidence="1">A Gly-cisPro motif from one monomer fits into the active site of the other monomer to allow specific chiral rejection of L-amino acids.</text>
</comment>
<comment type="similarity">
    <text evidence="1">Belongs to the DTD family.</text>
</comment>
<protein>
    <recommendedName>
        <fullName evidence="1">D-aminoacyl-tRNA deacylase</fullName>
        <shortName evidence="1">DTD</shortName>
        <ecNumber evidence="1">3.1.1.96</ecNumber>
    </recommendedName>
    <alternativeName>
        <fullName evidence="1">Gly-tRNA(Ala) deacylase</fullName>
    </alternativeName>
</protein>
<proteinExistence type="inferred from homology"/>
<keyword id="KW-0963">Cytoplasm</keyword>
<keyword id="KW-0378">Hydrolase</keyword>
<keyword id="KW-0694">RNA-binding</keyword>
<keyword id="KW-0820">tRNA-binding</keyword>